<protein>
    <recommendedName>
        <fullName>Gag polyprotein</fullName>
    </recommendedName>
    <alternativeName>
        <fullName>Pr55Gag</fullName>
    </alternativeName>
    <component>
        <recommendedName>
            <fullName>Matrix protein p17</fullName>
            <shortName>MA</shortName>
        </recommendedName>
    </component>
    <component>
        <recommendedName>
            <fullName>Capsid protein p24</fullName>
            <shortName>CA</shortName>
        </recommendedName>
    </component>
    <component>
        <recommendedName>
            <fullName evidence="6">Spacer peptide 1</fullName>
            <shortName>SP1</shortName>
        </recommendedName>
        <alternativeName>
            <fullName>p2</fullName>
        </alternativeName>
    </component>
    <component>
        <recommendedName>
            <fullName>Nucleocapsid protein p7</fullName>
            <shortName>NC</shortName>
        </recommendedName>
    </component>
    <component>
        <recommendedName>
            <fullName evidence="6">Spacer peptide 2</fullName>
            <shortName>SP2</shortName>
        </recommendedName>
        <alternativeName>
            <fullName>p1</fullName>
        </alternativeName>
    </component>
    <component>
        <recommendedName>
            <fullName>p6-gag</fullName>
        </recommendedName>
    </component>
</protein>
<organism>
    <name type="scientific">Human immunodeficiency virus type 1 group M subtype D (isolate NDK)</name>
    <name type="common">HIV-1</name>
    <dbReference type="NCBI Taxonomy" id="11695"/>
    <lineage>
        <taxon>Viruses</taxon>
        <taxon>Riboviria</taxon>
        <taxon>Pararnavirae</taxon>
        <taxon>Artverviricota</taxon>
        <taxon>Revtraviricetes</taxon>
        <taxon>Ortervirales</taxon>
        <taxon>Retroviridae</taxon>
        <taxon>Orthoretrovirinae</taxon>
        <taxon>Lentivirus</taxon>
        <taxon>Human immunodeficiency virus type 1</taxon>
    </lineage>
</organism>
<accession>P18800</accession>
<name>GAG_HV1ND</name>
<comment type="function">
    <molecule>Gag polyprotein</molecule>
    <text evidence="5">Mediates, with Gag-Pol polyprotein, the essential events in virion assembly, including binding the plasma membrane, making the protein-protein interactions necessary to create spherical particles, recruiting the viral Env proteins, and packaging the genomic RNA via direct interactions with the RNA packaging sequence (Psi).</text>
</comment>
<comment type="function">
    <molecule>Matrix protein p17</molecule>
    <text evidence="1 6">Targets the polyprotein to the plasma membrane via a multipartite membrane-binding signal, that includes its myristoylated N-terminus (By similarity). Matrix protein is part of the pre-integration complex. Implicated in the release from host cell mediated by Vpu. Binds to RNA (By similarity).</text>
</comment>
<comment type="function">
    <molecule>Capsid protein p24</molecule>
    <text evidence="5 6">Forms the conical core that encapsulates the genomic RNA-nucleocapsid complex in the virion. Most core are conical, with only 7% tubular. The core is constituted by capsid protein hexamer subunits. The core is disassembled soon after virion entry (By similarity). The capsid promotes immune invasion by cloaking viral DNA from CGAS detection (By similarity). Host restriction factors such as TRIM5-alpha or TRIMCyp bind retroviral capsids and cause premature capsid disassembly, leading to blocks in reverse transcription. Capsid restriction by TRIM5 is one of the factors which restricts HIV-1 to the human species. Host PIN1 apparently facilitates the virion uncoating (By similarity). On the other hand, interactions with PDZD8 or CYPA stabilize the capsid (By similarity).</text>
</comment>
<comment type="function">
    <molecule>Nucleocapsid protein p7</molecule>
    <text evidence="5">Encapsulates and protects viral dimeric unspliced genomic RNA (gRNA). Binds these RNAs through its zinc fingers. Acts as a nucleic acid chaperone which is involved in rearangement of nucleic acid secondary structure during gRNA retrotranscription. Also facilitates template switch leading to recombination. As part of the polyprotein, participates in gRNA dimerization, packaging, tRNA incorporation and virion assembly.</text>
</comment>
<comment type="function">
    <molecule>p6-gag</molecule>
    <text evidence="6">Plays a role in budding of the assembled particle by interacting with the host class E VPS proteins TSG101 and PDCD6IP/AIP1.</text>
</comment>
<comment type="subunit">
    <molecule>Gag polyprotein</molecule>
    <text evidence="4 5">Homotrimer; further assembles as hexamers of trimers. Oligomerization possibly creates a central hole into which the cytoplasmic tail of the gp41 envelope protein may be inserted. Interacts with host TRIM22; this interaction seems to disrupt proper trafficking of Gag polyprotein and may interfere with budding. Interacts with host PDZD8. When ubiquitinated, interacts (via p6-gag domain) with host PACSIN2; this interaction allows PACSIN2 recruitment to viral assembly sites and its subsequent incorporation into virions. Interacts with MOV10 (By similarity).</text>
</comment>
<comment type="subunit">
    <molecule>Matrix protein p17</molecule>
    <text evidence="5 6">Homotrimer; further assembles as hexamers of trimers. Interacts with gp41 (via C-terminus). Interacts with host CALM1; this interaction induces a conformational change in the Matrix protein, triggering exposure of the myristate group. Interacts with host AP3D1; this interaction allows the polyprotein trafficking to multivesicular bodies during virus assembly. Part of the pre-integration complex (PIC) which is composed of viral genome, matrix protein, Vpr and integrase.</text>
</comment>
<comment type="subunit">
    <molecule>Capsid protein p24</molecule>
    <text evidence="5 6">Homodimer; the homodimer further multimerizes as homohexamers or homopentamers (By similarity). Interacts with host NUP98 (By similarity). Interacts with host PPIA/CYPA; this interaction stabilizes the capsid (By similarity). Interacts with host NUP153 (By similarity). Interacts with host PDZD8; this interaction stabilizes the capsid. Interacts with host TRIM5; this interaction destabilizes the capsid (By similarity). Interacts with host CPSF6 (By similarity). Interacts with host NONO; the interaction is weak (By similarity).</text>
</comment>
<comment type="subunit">
    <molecule>Nucleocapsid protein p7</molecule>
    <text evidence="6">Interacts with host NUP98.</text>
</comment>
<comment type="subunit">
    <molecule>p6-gag</molecule>
    <text evidence="3 6">Interacts with Vpr; this interaction allows Vpr incorporation into the virion. Interacts with host TSG101. p6-gag interacts with host PDCD6IP/AIP1.</text>
</comment>
<comment type="subcellular location">
    <molecule>Gag polyprotein</molecule>
    <subcellularLocation>
        <location evidence="6">Host cell membrane</location>
        <topology evidence="6">Lipid-anchor</topology>
    </subcellularLocation>
    <subcellularLocation>
        <location evidence="6">Host endosome</location>
        <location evidence="6">Host multivesicular body</location>
    </subcellularLocation>
    <text evidence="6">These locations are probably linked to virus assembly sites. The main location is the cell membrane, but under some circumstances, late endosomal compartments can serve as productive sites for virion assembly.</text>
</comment>
<comment type="subcellular location">
    <molecule>Matrix protein p17</molecule>
    <subcellularLocation>
        <location evidence="6">Virion membrane</location>
        <topology evidence="6">Lipid-anchor</topology>
    </subcellularLocation>
    <subcellularLocation>
        <location evidence="1">Host nucleus</location>
    </subcellularLocation>
    <subcellularLocation>
        <location evidence="1">Host cytoplasm</location>
    </subcellularLocation>
</comment>
<comment type="subcellular location">
    <molecule>Capsid protein p24</molecule>
    <subcellularLocation>
        <location evidence="6">Virion</location>
    </subcellularLocation>
</comment>
<comment type="subcellular location">
    <molecule>Nucleocapsid protein p7</molecule>
    <subcellularLocation>
        <location evidence="6">Virion</location>
    </subcellularLocation>
</comment>
<comment type="alternative products">
    <event type="ribosomal frameshifting"/>
    <isoform>
        <id>P18800-1</id>
        <name>Gag polyprotein</name>
        <sequence type="displayed"/>
    </isoform>
    <isoform>
        <id>P18802-1</id>
        <name>Gag-Pol polyprotein</name>
        <sequence type="external"/>
    </isoform>
    <text>Translation results in the formation of the Gag polyprotein most of the time. Ribosomal frameshifting at the gag-pol genes boundary occurs at low frequency and produces the Gag-Pol polyprotein. This strategy of translation probably allows the virus to modulate the quantity of each viral protein. Maintenance of a correct Gag to Gag-Pol ratio is essential for RNA dimerization and viral infectivity.</text>
</comment>
<comment type="domain">
    <text evidence="6">Late-budding domains (L domains) are short sequence motifs essential for viral particle budding. They recruit proteins of the host ESCRT machinery (Endosomal Sorting Complex Required for Transport) or ESCRT-associated proteins. p6-gag contains two L domains: a PTAP/PSAP motif, which interacts with the UEV domain of TSG101 and a LYPX(n)L motif which interacts with PDCD6IP/AIP1.</text>
</comment>
<comment type="PTM">
    <text evidence="6">Gag-Pol polyprotein: Specific enzymatic cleavages by the viral protease yield mature proteins.</text>
</comment>
<comment type="PTM">
    <molecule>Matrix protein p17</molecule>
    <text evidence="5">Tyrosine phosphorylated presumably in the virion by a host kinase. Phosphorylation is apparently not a major regulator of membrane association.</text>
</comment>
<comment type="PTM">
    <text evidence="6">Capsid protein p24 is phosphorylated possibly by host MAPK1; this phosphorylation is necessary for Pin1-mediated virion uncoating.</text>
</comment>
<comment type="PTM">
    <text evidence="2">Nucleocapsid protein p7 is methylated by host PRMT6, impairing its function by reducing RNA annealing and the initiation of reverse transcription.</text>
</comment>
<comment type="miscellaneous">
    <text>NDK, isolated from a Zairean patient infected with AIDS, and is a highly cytopathogenic strain.</text>
</comment>
<comment type="miscellaneous">
    <text>HIV-1 lineages are divided in three main groups, M (for Major), O (for Outlier), and N (for New, or Non-M, Non-O). The vast majority of strains found worldwide belong to the group M. Group O seems to be endemic to and largely confined to Cameroon and neighboring countries in West Central Africa, where these viruses represent a small minority of HIV-1 strains. The group N is represented by a limited number of isolates from Cameroonian persons. The group M is further subdivided in 9 clades or subtypes (A to D, F to H, J and K).</text>
</comment>
<comment type="miscellaneous">
    <molecule>Isoform Gag polyprotein</molecule>
    <text>Produced by conventional translation.</text>
</comment>
<comment type="similarity">
    <text evidence="10">Belongs to the primate lentivirus group gag polyprotein family.</text>
</comment>
<reference key="1">
    <citation type="journal article" date="1989" name="Gene">
        <title>Nucleotide sequence of HIV1-NDK: a highly cytopathic strain of the human immunodeficiency virus.</title>
        <authorList>
            <person name="Spire B."/>
            <person name="Sire J."/>
            <person name="Zachar V."/>
            <person name="Rey F."/>
            <person name="Barre-Sinoussi F."/>
            <person name="Galibert F."/>
            <person name="Hampe A."/>
            <person name="Chermann J.C."/>
        </authorList>
    </citation>
    <scope>NUCLEOTIDE SEQUENCE [GENOMIC DNA]</scope>
</reference>
<reference key="2">
    <citation type="journal article" date="2003" name="Biochim. Biophys. Acta">
        <title>Role of HIV-1 Gag domains in viral assembly.</title>
        <authorList>
            <person name="Scarlata S."/>
            <person name="Carter C."/>
        </authorList>
    </citation>
    <scope>REVIEW</scope>
</reference>
<organismHost>
    <name type="scientific">Homo sapiens</name>
    <name type="common">Human</name>
    <dbReference type="NCBI Taxonomy" id="9606"/>
</organismHost>
<proteinExistence type="inferred from homology"/>
<keyword id="KW-0014">AIDS</keyword>
<keyword id="KW-0167">Capsid protein</keyword>
<keyword id="KW-1032">Host cell membrane</keyword>
<keyword id="KW-1035">Host cytoplasm</keyword>
<keyword id="KW-1039">Host endosome</keyword>
<keyword id="KW-1043">Host membrane</keyword>
<keyword id="KW-1048">Host nucleus</keyword>
<keyword id="KW-0945">Host-virus interaction</keyword>
<keyword id="KW-0449">Lipoprotein</keyword>
<keyword id="KW-0472">Membrane</keyword>
<keyword id="KW-0479">Metal-binding</keyword>
<keyword id="KW-0488">Methylation</keyword>
<keyword id="KW-0519">Myristate</keyword>
<keyword id="KW-0597">Phosphoprotein</keyword>
<keyword id="KW-0677">Repeat</keyword>
<keyword id="KW-0688">Ribosomal frameshifting</keyword>
<keyword id="KW-0694">RNA-binding</keyword>
<keyword id="KW-1198">Viral budding</keyword>
<keyword id="KW-1187">Viral budding via the host ESCRT complexes</keyword>
<keyword id="KW-0543">Viral nucleoprotein</keyword>
<keyword id="KW-1188">Viral release from host cell</keyword>
<keyword id="KW-0946">Virion</keyword>
<keyword id="KW-0862">Zinc</keyword>
<keyword id="KW-0863">Zinc-finger</keyword>
<gene>
    <name type="primary">gag</name>
</gene>
<evidence type="ECO:0000250" key="1"/>
<evidence type="ECO:0000250" key="2">
    <source>
        <dbReference type="UniProtKB" id="P03347"/>
    </source>
</evidence>
<evidence type="ECO:0000250" key="3">
    <source>
        <dbReference type="UniProtKB" id="P03348"/>
    </source>
</evidence>
<evidence type="ECO:0000250" key="4">
    <source>
        <dbReference type="UniProtKB" id="P03349"/>
    </source>
</evidence>
<evidence type="ECO:0000250" key="5">
    <source>
        <dbReference type="UniProtKB" id="P04591"/>
    </source>
</evidence>
<evidence type="ECO:0000250" key="6">
    <source>
        <dbReference type="UniProtKB" id="P12493"/>
    </source>
</evidence>
<evidence type="ECO:0000250" key="7">
    <source>
        <dbReference type="UniProtKB" id="P12497"/>
    </source>
</evidence>
<evidence type="ECO:0000255" key="8">
    <source>
        <dbReference type="PROSITE-ProRule" id="PRU00047"/>
    </source>
</evidence>
<evidence type="ECO:0000256" key="9">
    <source>
        <dbReference type="SAM" id="MobiDB-lite"/>
    </source>
</evidence>
<evidence type="ECO:0000305" key="10"/>
<dbReference type="EMBL" id="M27323">
    <property type="protein sequence ID" value="AAA44868.1"/>
    <property type="molecule type" value="Genomic_DNA"/>
</dbReference>
<dbReference type="PIR" id="JQ0065">
    <property type="entry name" value="FOLJND"/>
</dbReference>
<dbReference type="SMR" id="P18800"/>
<dbReference type="PRO" id="PR:P18800"/>
<dbReference type="Proteomes" id="UP000172620">
    <property type="component" value="Segment"/>
</dbReference>
<dbReference type="GO" id="GO:0042025">
    <property type="term" value="C:host cell nucleus"/>
    <property type="evidence" value="ECO:0007669"/>
    <property type="project" value="UniProtKB-SubCell"/>
</dbReference>
<dbReference type="GO" id="GO:0020002">
    <property type="term" value="C:host cell plasma membrane"/>
    <property type="evidence" value="ECO:0007669"/>
    <property type="project" value="UniProtKB-SubCell"/>
</dbReference>
<dbReference type="GO" id="GO:0072494">
    <property type="term" value="C:host multivesicular body"/>
    <property type="evidence" value="ECO:0007669"/>
    <property type="project" value="UniProtKB-SubCell"/>
</dbReference>
<dbReference type="GO" id="GO:0016020">
    <property type="term" value="C:membrane"/>
    <property type="evidence" value="ECO:0007669"/>
    <property type="project" value="UniProtKB-KW"/>
</dbReference>
<dbReference type="GO" id="GO:0019013">
    <property type="term" value="C:viral nucleocapsid"/>
    <property type="evidence" value="ECO:0007669"/>
    <property type="project" value="UniProtKB-KW"/>
</dbReference>
<dbReference type="GO" id="GO:0055036">
    <property type="term" value="C:virion membrane"/>
    <property type="evidence" value="ECO:0007669"/>
    <property type="project" value="UniProtKB-SubCell"/>
</dbReference>
<dbReference type="GO" id="GO:0003723">
    <property type="term" value="F:RNA binding"/>
    <property type="evidence" value="ECO:0007669"/>
    <property type="project" value="UniProtKB-KW"/>
</dbReference>
<dbReference type="GO" id="GO:0005198">
    <property type="term" value="F:structural molecule activity"/>
    <property type="evidence" value="ECO:0007669"/>
    <property type="project" value="InterPro"/>
</dbReference>
<dbReference type="GO" id="GO:0008270">
    <property type="term" value="F:zinc ion binding"/>
    <property type="evidence" value="ECO:0007669"/>
    <property type="project" value="UniProtKB-KW"/>
</dbReference>
<dbReference type="GO" id="GO:0039702">
    <property type="term" value="P:viral budding via host ESCRT complex"/>
    <property type="evidence" value="ECO:0007669"/>
    <property type="project" value="UniProtKB-KW"/>
</dbReference>
<dbReference type="GO" id="GO:0075523">
    <property type="term" value="P:viral translational frameshifting"/>
    <property type="evidence" value="ECO:0007669"/>
    <property type="project" value="UniProtKB-KW"/>
</dbReference>
<dbReference type="FunFam" id="1.10.1200.30:FF:000001">
    <property type="entry name" value="Gag polyprotein"/>
    <property type="match status" value="1"/>
</dbReference>
<dbReference type="FunFam" id="1.10.375.10:FF:000001">
    <property type="entry name" value="Gag polyprotein"/>
    <property type="match status" value="1"/>
</dbReference>
<dbReference type="FunFam" id="4.10.60.10:FF:000001">
    <property type="entry name" value="Gag polyprotein"/>
    <property type="match status" value="1"/>
</dbReference>
<dbReference type="Gene3D" id="1.10.1200.30">
    <property type="match status" value="1"/>
</dbReference>
<dbReference type="Gene3D" id="6.10.250.390">
    <property type="match status" value="1"/>
</dbReference>
<dbReference type="Gene3D" id="1.10.375.10">
    <property type="entry name" value="Human Immunodeficiency Virus Type 1 Capsid Protein"/>
    <property type="match status" value="1"/>
</dbReference>
<dbReference type="Gene3D" id="1.10.150.90">
    <property type="entry name" value="Immunodeficiency lentiviruses, gag gene matrix protein p17"/>
    <property type="match status" value="1"/>
</dbReference>
<dbReference type="Gene3D" id="1.20.5.760">
    <property type="entry name" value="Single helix bin"/>
    <property type="match status" value="1"/>
</dbReference>
<dbReference type="Gene3D" id="4.10.60.10">
    <property type="entry name" value="Zinc finger, CCHC-type"/>
    <property type="match status" value="1"/>
</dbReference>
<dbReference type="InterPro" id="IPR045345">
    <property type="entry name" value="Gag_p24_C"/>
</dbReference>
<dbReference type="InterPro" id="IPR014817">
    <property type="entry name" value="Gag_p6"/>
</dbReference>
<dbReference type="InterPro" id="IPR000071">
    <property type="entry name" value="Lentvrl_matrix_N"/>
</dbReference>
<dbReference type="InterPro" id="IPR012344">
    <property type="entry name" value="Matrix_HIV/RSV_N"/>
</dbReference>
<dbReference type="InterPro" id="IPR050195">
    <property type="entry name" value="Primate_lentivir_Gag_pol-like"/>
</dbReference>
<dbReference type="InterPro" id="IPR008916">
    <property type="entry name" value="Retrov_capsid_C"/>
</dbReference>
<dbReference type="InterPro" id="IPR008919">
    <property type="entry name" value="Retrov_capsid_N"/>
</dbReference>
<dbReference type="InterPro" id="IPR010999">
    <property type="entry name" value="Retrovr_matrix"/>
</dbReference>
<dbReference type="InterPro" id="IPR001878">
    <property type="entry name" value="Znf_CCHC"/>
</dbReference>
<dbReference type="InterPro" id="IPR036875">
    <property type="entry name" value="Znf_CCHC_sf"/>
</dbReference>
<dbReference type="PANTHER" id="PTHR40389:SF4">
    <property type="match status" value="1"/>
</dbReference>
<dbReference type="PANTHER" id="PTHR40389">
    <property type="entry name" value="ENDOGENOUS RETROVIRUS GROUP K MEMBER 24 GAG POLYPROTEIN-RELATED"/>
    <property type="match status" value="1"/>
</dbReference>
<dbReference type="Pfam" id="PF00540">
    <property type="entry name" value="Gag_p17"/>
    <property type="match status" value="1"/>
</dbReference>
<dbReference type="Pfam" id="PF19317">
    <property type="entry name" value="Gag_p24_C"/>
    <property type="match status" value="1"/>
</dbReference>
<dbReference type="Pfam" id="PF08705">
    <property type="entry name" value="Gag_p6"/>
    <property type="match status" value="1"/>
</dbReference>
<dbReference type="Pfam" id="PF00098">
    <property type="entry name" value="zf-CCHC"/>
    <property type="match status" value="2"/>
</dbReference>
<dbReference type="PRINTS" id="PR00234">
    <property type="entry name" value="HIV1MATRIX"/>
</dbReference>
<dbReference type="SMART" id="SM00343">
    <property type="entry name" value="ZnF_C2HC"/>
    <property type="match status" value="2"/>
</dbReference>
<dbReference type="SUPFAM" id="SSF47836">
    <property type="entry name" value="Retroviral matrix proteins"/>
    <property type="match status" value="1"/>
</dbReference>
<dbReference type="SUPFAM" id="SSF47353">
    <property type="entry name" value="Retrovirus capsid dimerization domain-like"/>
    <property type="match status" value="1"/>
</dbReference>
<dbReference type="SUPFAM" id="SSF47943">
    <property type="entry name" value="Retrovirus capsid protein, N-terminal core domain"/>
    <property type="match status" value="1"/>
</dbReference>
<dbReference type="SUPFAM" id="SSF57756">
    <property type="entry name" value="Retrovirus zinc finger-like domains"/>
    <property type="match status" value="1"/>
</dbReference>
<dbReference type="PROSITE" id="PS50158">
    <property type="entry name" value="ZF_CCHC"/>
    <property type="match status" value="2"/>
</dbReference>
<feature type="initiator methionine" description="Removed; by host" evidence="1">
    <location>
        <position position="1"/>
    </location>
</feature>
<feature type="chain" id="PRO_0000261225" description="Gag polyprotein">
    <location>
        <begin position="2"/>
        <end position="497"/>
    </location>
</feature>
<feature type="chain" id="PRO_0000038541" description="Matrix protein p17" evidence="1">
    <location>
        <begin position="2"/>
        <end position="129"/>
    </location>
</feature>
<feature type="chain" id="PRO_0000038542" description="Capsid protein p24" evidence="1">
    <location>
        <begin position="130"/>
        <end position="360"/>
    </location>
</feature>
<feature type="peptide" id="PRO_0000038543" description="Spacer peptide 1" evidence="1">
    <location>
        <begin position="361"/>
        <end position="375"/>
    </location>
</feature>
<feature type="chain" id="PRO_0000038544" description="Nucleocapsid protein p7" evidence="1">
    <location>
        <begin position="376"/>
        <end position="430"/>
    </location>
</feature>
<feature type="peptide" id="PRO_0000038545" description="Spacer peptide 2" evidence="1">
    <location>
        <begin position="431"/>
        <end position="446"/>
    </location>
</feature>
<feature type="chain" id="PRO_0000038546" description="p6-gag" evidence="1">
    <location>
        <begin position="447"/>
        <end position="497"/>
    </location>
</feature>
<feature type="zinc finger region" description="CCHC-type 1" evidence="8">
    <location>
        <begin position="388"/>
        <end position="405"/>
    </location>
</feature>
<feature type="zinc finger region" description="CCHC-type 2" evidence="8">
    <location>
        <begin position="409"/>
        <end position="426"/>
    </location>
</feature>
<feature type="region of interest" description="Interaction with Gp41" evidence="6">
    <location>
        <begin position="7"/>
        <end position="31"/>
    </location>
</feature>
<feature type="region of interest" description="Interaction with host CALM1" evidence="5">
    <location>
        <begin position="8"/>
        <end position="43"/>
    </location>
</feature>
<feature type="region of interest" description="Interaction with host AP3D1" evidence="7">
    <location>
        <begin position="12"/>
        <end position="19"/>
    </location>
</feature>
<feature type="region of interest" description="Interaction with membrane phosphatidylinositol 4,5-bisphosphate and RNA" evidence="6">
    <location>
        <begin position="14"/>
        <end position="33"/>
    </location>
</feature>
<feature type="region of interest" description="Interaction with membrane phosphatidylinositol 4,5-bisphosphate" evidence="6">
    <location>
        <begin position="73"/>
        <end position="77"/>
    </location>
</feature>
<feature type="region of interest" description="Disordered" evidence="9">
    <location>
        <begin position="102"/>
        <end position="125"/>
    </location>
</feature>
<feature type="region of interest" description="Interaction with host PPIA/CYPA and NUP153" evidence="6">
    <location>
        <begin position="186"/>
        <end position="224"/>
    </location>
</feature>
<feature type="region of interest" description="PPIA/CYPA-binding loop" evidence="5">
    <location>
        <begin position="214"/>
        <end position="222"/>
    </location>
</feature>
<feature type="region of interest" description="Dimerization/Multimerization of capsid protein p24" evidence="5">
    <location>
        <begin position="274"/>
        <end position="360"/>
    </location>
</feature>
<feature type="region of interest" description="Disordered" evidence="9">
    <location>
        <begin position="437"/>
        <end position="497"/>
    </location>
</feature>
<feature type="short sequence motif" description="Nuclear export signal" evidence="1">
    <location>
        <begin position="16"/>
        <end position="22"/>
    </location>
</feature>
<feature type="short sequence motif" description="Nuclear localization signal" evidence="1">
    <location>
        <begin position="26"/>
        <end position="32"/>
    </location>
</feature>
<feature type="short sequence motif" description="PTAP/PSAP motif">
    <location>
        <begin position="453"/>
        <end position="456"/>
    </location>
</feature>
<feature type="short sequence motif" description="LYPX(n)L motif">
    <location>
        <begin position="480"/>
        <end position="489"/>
    </location>
</feature>
<feature type="compositionally biased region" description="Low complexity" evidence="9">
    <location>
        <begin position="116"/>
        <end position="125"/>
    </location>
</feature>
<feature type="site" description="Cleavage; by viral protease" evidence="1">
    <location>
        <begin position="129"/>
        <end position="130"/>
    </location>
</feature>
<feature type="site" description="Cleavage; by viral protease" evidence="1">
    <location>
        <begin position="360"/>
        <end position="361"/>
    </location>
</feature>
<feature type="site" description="Cleavage; by viral protease" evidence="1">
    <location>
        <begin position="375"/>
        <end position="376"/>
    </location>
</feature>
<feature type="site" description="Cleavage; by viral protease" evidence="1">
    <location>
        <begin position="430"/>
        <end position="431"/>
    </location>
</feature>
<feature type="site" description="Cleavage; by viral protease" evidence="1">
    <location>
        <begin position="446"/>
        <end position="447"/>
    </location>
</feature>
<feature type="modified residue" description="Phosphoserine; by host MAPK1" evidence="6">
    <location>
        <position position="145"/>
    </location>
</feature>
<feature type="modified residue" description="Asymmetric dimethylarginine; in Nucleocapsid protein p7; by host PRMT6" evidence="1">
    <location>
        <position position="385"/>
    </location>
</feature>
<feature type="modified residue" description="Asymmetric dimethylarginine; in Nucleocapsid protein p7; by host PRMT6" evidence="1">
    <location>
        <position position="407"/>
    </location>
</feature>
<feature type="lipid moiety-binding region" description="N-myristoyl glycine; by host" evidence="1">
    <location>
        <position position="2"/>
    </location>
</feature>
<sequence>MGARASVLSGGKLDTWERIRLRPGGKKKYALKHLIWASRELERFTLNPGLLETSEGCKQIIGQLQPSIQTGSEEIRSLYNTVATLYCVHERIEVKDTKEAVEKMEEEQNKSKKKTQQAAADSSQVSQNYPIVQNLQGQMVHQAISPRTLNAWVKVIEEKAFSPEVIPMFSALSEGATPQDLNTMLNTVGGHQAAMQMLKETINDEAAEWDRLHPVHAGPVAPGQMREPRGSDIAGTTSTLQEQIAWMTSNPPIPVGEIYKRWIILGLNKIVRMYSPVSILDIRQGPKEPFRDYVDRFYKTLRAEQASQDVKNWMTETLLVQNANPDCKTILKALGPQATLEEMMTACQGVGGPGHKARVLAEAMSQVTGSATAVMMQRGNFKGPRKSIKCFNCGKEGHTAKNCRAPRKKGCWKCGREGHQMKDCTERQANFLGKIWPSHKGRPGNFLQSRPEPTAPPAESFGFGEEITPSQKQEQKDKELYPLASLKSLFGNDPSSQ</sequence>